<comment type="function">
    <text evidence="9 10 11 12 15 18 19 20 21 22 23 24 25 26 27 29 30 31">Non-reducing polyketide synthase; part of the gene cluster that mediates the biosynthesis of dihydroxynaphthalene (DHN)-melanin, a bluish-green pigment and a structural component of the conidial wall (PubMed:10515939, PubMed:18539819, PubMed:19156203, PubMed:9620950). The first step of the pathway is the production of the heptaketide naphtopyrone YWA1 by the polyketide synthase alb1 though condensation of acetyl-CoA with malonyl-CoA (PubMed:11040426, PubMed:9620950). The naphtopyrone YWA1 is then converted to the pentaketide 1,3,6,8-tetrahydroxynaphthalene (1,3,6,8-THN) by the heptaketide hydrolyase ayg1 though chain-length shortening (PubMed:10515939, PubMed:11350964). 1,3,6,8-THN is substrate of the hydroxynaphthalene reductase arp2 to yield scytalone (PubMed:10515939). The scytalone dehydratase arp1 then reduces scytalone to 1,3,8-THN (PubMed:10515939). 1,3,8-THN is also substrate of the hydroxynaphthalene reductase arp2 to yield vermelone (PubMed:10515939). Vermelone is further converted by the multicopper oxidase abr1 to 1,8-DHN (PubMed:10515939). Finally the laccase abr2 transforms 1,8-DHN to DHN-melanin (PubMed:10515939). DHN-melanin biosynthesis appears to be initiated in endosomes where early enzymes (abl1, ayg1, arp1 and arp2) localize, with exocytosis leading to melanin deposition on the cell surface where late enzymes (abr1 and abr2) localize (PubMed:26972005). DHN-melanin is an important structural component of the outer cell wall and is required for the presence of conidial surface hydrophobins (PubMed:19703288). DHN-melanin also plays a crucial role in fungal virulence, including a protective role against the host's immune defenses (PubMed:12464010, PubMed:16110796, PubMed:20145078, PubMed:21501368, PubMed:21573171, PubMed:21747802, PubMed:24818666, PubMed:24836942, PubMed:25810442, PubMed:26972005, PubMed:9620950, PubMed:9832321). DHN-melanin protects also conidia against amoeba predation (PubMed:25684622).</text>
</comment>
<comment type="catalytic activity">
    <reaction evidence="10">
        <text>6 malonyl-CoA + acetyl-CoA + 6 H(+) = naphtopyrone YWA1 + 6 CO2 + 7 CoA + H2O</text>
        <dbReference type="Rhea" id="RHEA:62652"/>
        <dbReference type="ChEBI" id="CHEBI:15377"/>
        <dbReference type="ChEBI" id="CHEBI:15378"/>
        <dbReference type="ChEBI" id="CHEBI:16526"/>
        <dbReference type="ChEBI" id="CHEBI:57287"/>
        <dbReference type="ChEBI" id="CHEBI:57288"/>
        <dbReference type="ChEBI" id="CHEBI:57384"/>
        <dbReference type="ChEBI" id="CHEBI:133763"/>
    </reaction>
    <physiologicalReaction direction="left-to-right" evidence="10">
        <dbReference type="Rhea" id="RHEA:62653"/>
    </physiologicalReaction>
</comment>
<comment type="pathway">
    <text evidence="9">Pigment biosynthesis; melanin biosynthesis.</text>
</comment>
<comment type="subcellular location">
    <subcellularLocation>
        <location evidence="29">Endosome</location>
    </subcellularLocation>
</comment>
<comment type="induction">
    <text evidence="15 17">Expression is up-regulated by laeA during mycelial growth in a liquid medium but laeA is not involved in alb1 regulation during conidial morphogenesis (PubMed:17630330). Expression is, at least in part, controlled by the cAMP/PKA signal transduction pathway (PubMed:16110796).</text>
</comment>
<comment type="domain">
    <text evidence="2">Multidomain protein; including a starter unit:ACP transacylase (SAT) that selects the starter unit; a ketosynthase (KS) that catalyzes repeated decarboxylative condensation to elongate the polyketide backbone; a malonyl-CoA:ACP transacylase (MAT) that selects and transfers the extender unit malonyl-CoA; a product template (PT) domain that controls the immediate cyclization regioselectivity of the reactive polyketide backbone; and an acyl-carrier protein (ACP) that serves as the tether of the growing and completed polyketide via its phosphopantetheinyl arm (By similarity).</text>
</comment>
<comment type="domain">
    <text evidence="1">The C-terminal region is involved in Claisen-type cyclization of the second ring of naphthopyrone.</text>
</comment>
<comment type="disruption phenotype">
    <text evidence="12 13 14 16 18 20 21 22 23 24 25 26 27 28 29 30 31">Impairs the production of melanin and leads to an albino phenotype (PubMed:15321679, PubMed:15812003, PubMed:17343676, PubMed:19156203, PubMed:26701308, PubMed:9620950). Blocks the synthesis of the intermediate 1,3,6,8-tetrahydroxynaphthalene (1,3,6,8-THN) (PubMed:9620950). Results in an altered conidial surface with masked surface rodlet layer, leaky cell wall allowing the deposition of proteins on the cell surface and exposing the otherwise-masked cell wall polysaccharides at the surface (PubMed:19703288, PubMed:24818666, PubMed:26972005). Also results in a dramatic reduction of virulence in a mice models of infections (pulmonary and cutanous) with efficient complement component C3 binding on conidial surfaces and increased neutrophil-mediated phagocytosis (PubMed:12464010, PubMed:20145078, PubMed:21501368, PubMed:21573171, PubMed:21747802, PubMed:24836942, PubMed:9620950, PubMed:9832321). Also decreases the protection of conidia against amoeba predation (PubMed:25684622). Decreases significantly the ability of conidia to activate platelets and to induce platelet aggregation (PubMed:25810442). Causes enhanced insect mortality compared to the parent strain in a wax moth Galleria mellonella infection model, probably through exacerbated immune response of the wax moth (PubMed:19156203).</text>
</comment>
<feature type="chain" id="PRO_0000436877" description="Conidial pigment polyketide synthase alb1">
    <location>
        <begin position="1"/>
        <end position="2146"/>
    </location>
</feature>
<feature type="domain" description="Ketosynthase family 3 (KS3)" evidence="5">
    <location>
        <begin position="375"/>
        <end position="806"/>
    </location>
</feature>
<feature type="domain" description="PKS/mFAS DH" evidence="6">
    <location>
        <begin position="1294"/>
        <end position="1598"/>
    </location>
</feature>
<feature type="domain" description="Carrier 1" evidence="4">
    <location>
        <begin position="1647"/>
        <end position="1721"/>
    </location>
</feature>
<feature type="domain" description="Carrier 2" evidence="4">
    <location>
        <begin position="1768"/>
        <end position="1845"/>
    </location>
</feature>
<feature type="region of interest" description="N-terminal acylcarrier protein transacylase domain (SAT)" evidence="3">
    <location>
        <begin position="8"/>
        <end position="244"/>
    </location>
</feature>
<feature type="region of interest" description="Malonyl-CoA:ACP transacylase (MAT) domain" evidence="3">
    <location>
        <begin position="911"/>
        <end position="1232"/>
    </location>
</feature>
<feature type="region of interest" description="Product template (PT) domain" evidence="3">
    <location>
        <begin position="1290"/>
        <end position="1602"/>
    </location>
</feature>
<feature type="region of interest" description="N-terminal hotdog fold" evidence="6">
    <location>
        <begin position="1294"/>
        <end position="1427"/>
    </location>
</feature>
<feature type="region of interest" description="C-terminal hotdog fold" evidence="6">
    <location>
        <begin position="1453"/>
        <end position="1598"/>
    </location>
</feature>
<feature type="region of interest" description="Disordered" evidence="8">
    <location>
        <begin position="1611"/>
        <end position="1644"/>
    </location>
</feature>
<feature type="region of interest" description="Disordered" evidence="8">
    <location>
        <begin position="1724"/>
        <end position="1769"/>
    </location>
</feature>
<feature type="region of interest" description="Claisen cyclase domain" evidence="1">
    <location>
        <begin position="1892"/>
        <end position="2019"/>
    </location>
</feature>
<feature type="compositionally biased region" description="Pro residues" evidence="8">
    <location>
        <begin position="1627"/>
        <end position="1639"/>
    </location>
</feature>
<feature type="compositionally biased region" description="Low complexity" evidence="8">
    <location>
        <begin position="1738"/>
        <end position="1750"/>
    </location>
</feature>
<feature type="active site" description="For beta-ketoacyl synthase activity" evidence="5">
    <location>
        <position position="547"/>
    </location>
</feature>
<feature type="active site" description="For beta-ketoacyl synthase activity" evidence="5">
    <location>
        <position position="682"/>
    </location>
</feature>
<feature type="active site" description="For beta-ketoacyl synthase activity" evidence="5">
    <location>
        <position position="724"/>
    </location>
</feature>
<feature type="active site" description="For acyl/malonyl transferase activity" evidence="7">
    <location>
        <position position="1001"/>
    </location>
</feature>
<feature type="active site" description="Proton acceptor; for dehydratase activity" evidence="6">
    <location>
        <position position="1326"/>
    </location>
</feature>
<feature type="active site" description="Proton donor; for dehydratase activity" evidence="6">
    <location>
        <position position="1511"/>
    </location>
</feature>
<feature type="active site" description="For Claisen cyclase activity" evidence="1">
    <location>
        <position position="1962"/>
    </location>
</feature>
<feature type="modified residue" description="O-(pantetheine 4'-phosphoryl)serine" evidence="4">
    <location>
        <position position="1681"/>
    </location>
</feature>
<feature type="modified residue" description="O-(pantetheine 4'-phosphoryl)serine" evidence="4">
    <location>
        <position position="1805"/>
    </location>
</feature>
<keyword id="KW-0967">Endosome</keyword>
<keyword id="KW-0511">Multifunctional enzyme</keyword>
<keyword id="KW-0596">Phosphopantetheine</keyword>
<keyword id="KW-0597">Phosphoprotein</keyword>
<keyword id="KW-1185">Reference proteome</keyword>
<keyword id="KW-0677">Repeat</keyword>
<keyword id="KW-0808">Transferase</keyword>
<keyword id="KW-0843">Virulence</keyword>
<dbReference type="EC" id="2.3.1.-" evidence="10"/>
<dbReference type="EMBL" id="AAHF01000001">
    <property type="protein sequence ID" value="EAL94057.1"/>
    <property type="molecule type" value="Genomic_DNA"/>
</dbReference>
<dbReference type="RefSeq" id="XP_756095.1">
    <property type="nucleotide sequence ID" value="XM_751002.1"/>
</dbReference>
<dbReference type="SMR" id="Q4WZA8"/>
<dbReference type="STRING" id="330879.Q4WZA8"/>
<dbReference type="ESTHER" id="aspfu-PKSP">
    <property type="family name" value="Thioesterase"/>
</dbReference>
<dbReference type="EnsemblFungi" id="EAL94057">
    <property type="protein sequence ID" value="EAL94057"/>
    <property type="gene ID" value="AFUA_2G17600"/>
</dbReference>
<dbReference type="GeneID" id="3513291"/>
<dbReference type="KEGG" id="afm:AFUA_2G17600"/>
<dbReference type="VEuPathDB" id="FungiDB:Afu2g17600"/>
<dbReference type="eggNOG" id="KOG1202">
    <property type="taxonomic scope" value="Eukaryota"/>
</dbReference>
<dbReference type="HOGENOM" id="CLU_000022_6_0_1"/>
<dbReference type="InParanoid" id="Q4WZA8"/>
<dbReference type="OMA" id="WKDSIWA"/>
<dbReference type="OrthoDB" id="329835at2759"/>
<dbReference type="UniPathway" id="UPA00785"/>
<dbReference type="PHI-base" id="PHI:6891"/>
<dbReference type="Proteomes" id="UP000002530">
    <property type="component" value="Chromosome 2"/>
</dbReference>
<dbReference type="GO" id="GO:0005768">
    <property type="term" value="C:endosome"/>
    <property type="evidence" value="ECO:0007669"/>
    <property type="project" value="UniProtKB-SubCell"/>
</dbReference>
<dbReference type="GO" id="GO:0004315">
    <property type="term" value="F:3-oxoacyl-[acyl-carrier-protein] synthase activity"/>
    <property type="evidence" value="ECO:0007669"/>
    <property type="project" value="InterPro"/>
</dbReference>
<dbReference type="GO" id="GO:0004014">
    <property type="term" value="F:adenosylmethionine decarboxylase activity"/>
    <property type="evidence" value="ECO:0007669"/>
    <property type="project" value="InterPro"/>
</dbReference>
<dbReference type="GO" id="GO:0004312">
    <property type="term" value="F:fatty acid synthase activity"/>
    <property type="evidence" value="ECO:0000318"/>
    <property type="project" value="GO_Central"/>
</dbReference>
<dbReference type="GO" id="GO:0031177">
    <property type="term" value="F:phosphopantetheine binding"/>
    <property type="evidence" value="ECO:0007669"/>
    <property type="project" value="InterPro"/>
</dbReference>
<dbReference type="GO" id="GO:0140614">
    <property type="term" value="P:1,8-dihydroxynaphthalene-melanin biosynthetic process"/>
    <property type="evidence" value="ECO:0000315"/>
    <property type="project" value="AspGD"/>
</dbReference>
<dbReference type="GO" id="GO:0042243">
    <property type="term" value="P:asexual spore wall assembly"/>
    <property type="evidence" value="ECO:0000315"/>
    <property type="project" value="AspGD"/>
</dbReference>
<dbReference type="GO" id="GO:0052034">
    <property type="term" value="P:effector-mediated suppression of host pattern-triggered immunity"/>
    <property type="evidence" value="ECO:0000304"/>
    <property type="project" value="PHI-base"/>
</dbReference>
<dbReference type="GO" id="GO:0006633">
    <property type="term" value="P:fatty acid biosynthetic process"/>
    <property type="evidence" value="ECO:0000318"/>
    <property type="project" value="GO_Central"/>
</dbReference>
<dbReference type="GO" id="GO:0042438">
    <property type="term" value="P:melanin biosynthetic process"/>
    <property type="evidence" value="ECO:0000315"/>
    <property type="project" value="AspGD"/>
</dbReference>
<dbReference type="GO" id="GO:0046148">
    <property type="term" value="P:pigment biosynthetic process"/>
    <property type="evidence" value="ECO:0000315"/>
    <property type="project" value="AspGD"/>
</dbReference>
<dbReference type="GO" id="GO:0075136">
    <property type="term" value="P:response to host"/>
    <property type="evidence" value="ECO:0000270"/>
    <property type="project" value="AspGD"/>
</dbReference>
<dbReference type="GO" id="GO:0019748">
    <property type="term" value="P:secondary metabolic process"/>
    <property type="evidence" value="ECO:0000303"/>
    <property type="project" value="AspGD"/>
</dbReference>
<dbReference type="GO" id="GO:0044550">
    <property type="term" value="P:secondary metabolite biosynthetic process"/>
    <property type="evidence" value="ECO:0000318"/>
    <property type="project" value="GO_Central"/>
</dbReference>
<dbReference type="GO" id="GO:0008295">
    <property type="term" value="P:spermidine biosynthetic process"/>
    <property type="evidence" value="ECO:0007669"/>
    <property type="project" value="InterPro"/>
</dbReference>
<dbReference type="CDD" id="cd00833">
    <property type="entry name" value="PKS"/>
    <property type="match status" value="1"/>
</dbReference>
<dbReference type="FunFam" id="3.40.366.10:FF:000011">
    <property type="entry name" value="Polyketide synthetase PksP"/>
    <property type="match status" value="1"/>
</dbReference>
<dbReference type="FunFam" id="3.40.366.10:FF:000002">
    <property type="entry name" value="Probable polyketide synthase 2"/>
    <property type="match status" value="1"/>
</dbReference>
<dbReference type="FunFam" id="1.10.1200.10:FF:000011">
    <property type="entry name" value="Sterigmatocystin biosynthesis polyketide synthase"/>
    <property type="match status" value="2"/>
</dbReference>
<dbReference type="FunFam" id="3.10.129.110:FF:000001">
    <property type="entry name" value="Sterigmatocystin biosynthesis polyketide synthase"/>
    <property type="match status" value="1"/>
</dbReference>
<dbReference type="FunFam" id="3.40.47.10:FF:000031">
    <property type="entry name" value="Sterigmatocystin biosynthesis polyketide synthase"/>
    <property type="match status" value="1"/>
</dbReference>
<dbReference type="FunFam" id="3.40.50.1820:FF:000116">
    <property type="entry name" value="Sterigmatocystin biosynthesis polyketide synthase"/>
    <property type="match status" value="1"/>
</dbReference>
<dbReference type="Gene3D" id="3.30.70.3290">
    <property type="match status" value="1"/>
</dbReference>
<dbReference type="Gene3D" id="3.40.47.10">
    <property type="match status" value="1"/>
</dbReference>
<dbReference type="Gene3D" id="1.10.1200.10">
    <property type="entry name" value="ACP-like"/>
    <property type="match status" value="2"/>
</dbReference>
<dbReference type="Gene3D" id="3.40.50.1820">
    <property type="entry name" value="alpha/beta hydrolase"/>
    <property type="match status" value="1"/>
</dbReference>
<dbReference type="Gene3D" id="3.40.366.10">
    <property type="entry name" value="Malonyl-Coenzyme A Acyl Carrier Protein, domain 2"/>
    <property type="match status" value="2"/>
</dbReference>
<dbReference type="Gene3D" id="3.10.129.110">
    <property type="entry name" value="Polyketide synthase dehydratase"/>
    <property type="match status" value="1"/>
</dbReference>
<dbReference type="InterPro" id="IPR029058">
    <property type="entry name" value="AB_hydrolase_fold"/>
</dbReference>
<dbReference type="InterPro" id="IPR001227">
    <property type="entry name" value="Ac_transferase_dom_sf"/>
</dbReference>
<dbReference type="InterPro" id="IPR036736">
    <property type="entry name" value="ACP-like_sf"/>
</dbReference>
<dbReference type="InterPro" id="IPR014043">
    <property type="entry name" value="Acyl_transferase_dom"/>
</dbReference>
<dbReference type="InterPro" id="IPR016035">
    <property type="entry name" value="Acyl_Trfase/lysoPLipase"/>
</dbReference>
<dbReference type="InterPro" id="IPR018201">
    <property type="entry name" value="Ketoacyl_synth_AS"/>
</dbReference>
<dbReference type="InterPro" id="IPR014031">
    <property type="entry name" value="Ketoacyl_synth_C"/>
</dbReference>
<dbReference type="InterPro" id="IPR014030">
    <property type="entry name" value="Ketoacyl_synth_N"/>
</dbReference>
<dbReference type="InterPro" id="IPR016036">
    <property type="entry name" value="Malonyl_transacylase_ACP-bd"/>
</dbReference>
<dbReference type="InterPro" id="IPR020841">
    <property type="entry name" value="PKS_Beta-ketoAc_synthase_dom"/>
</dbReference>
<dbReference type="InterPro" id="IPR042104">
    <property type="entry name" value="PKS_dehydratase_sf"/>
</dbReference>
<dbReference type="InterPro" id="IPR049900">
    <property type="entry name" value="PKS_mFAS_DH"/>
</dbReference>
<dbReference type="InterPro" id="IPR050091">
    <property type="entry name" value="PKS_NRPS_Biosynth_Enz"/>
</dbReference>
<dbReference type="InterPro" id="IPR020806">
    <property type="entry name" value="PKS_PP-bd"/>
</dbReference>
<dbReference type="InterPro" id="IPR009081">
    <property type="entry name" value="PP-bd_ACP"/>
</dbReference>
<dbReference type="InterPro" id="IPR006162">
    <property type="entry name" value="Ppantetheine_attach_site"/>
</dbReference>
<dbReference type="InterPro" id="IPR030918">
    <property type="entry name" value="PT_fungal_PKS"/>
</dbReference>
<dbReference type="InterPro" id="IPR016067">
    <property type="entry name" value="S-AdoMet_deCO2ase_core"/>
</dbReference>
<dbReference type="InterPro" id="IPR032088">
    <property type="entry name" value="SAT"/>
</dbReference>
<dbReference type="InterPro" id="IPR001031">
    <property type="entry name" value="Thioesterase"/>
</dbReference>
<dbReference type="InterPro" id="IPR016039">
    <property type="entry name" value="Thiolase-like"/>
</dbReference>
<dbReference type="NCBIfam" id="TIGR04532">
    <property type="entry name" value="PT_fungal_PKS"/>
    <property type="match status" value="1"/>
</dbReference>
<dbReference type="PANTHER" id="PTHR43775">
    <property type="entry name" value="FATTY ACID SYNTHASE"/>
    <property type="match status" value="1"/>
</dbReference>
<dbReference type="PANTHER" id="PTHR43775:SF37">
    <property type="entry name" value="SI:DKEY-61P9.11"/>
    <property type="match status" value="1"/>
</dbReference>
<dbReference type="Pfam" id="PF00698">
    <property type="entry name" value="Acyl_transf_1"/>
    <property type="match status" value="1"/>
</dbReference>
<dbReference type="Pfam" id="PF00109">
    <property type="entry name" value="ketoacyl-synt"/>
    <property type="match status" value="1"/>
</dbReference>
<dbReference type="Pfam" id="PF02801">
    <property type="entry name" value="Ketoacyl-synt_C"/>
    <property type="match status" value="1"/>
</dbReference>
<dbReference type="Pfam" id="PF00550">
    <property type="entry name" value="PP-binding"/>
    <property type="match status" value="2"/>
</dbReference>
<dbReference type="Pfam" id="PF16073">
    <property type="entry name" value="SAT"/>
    <property type="match status" value="1"/>
</dbReference>
<dbReference type="Pfam" id="PF00975">
    <property type="entry name" value="Thioesterase"/>
    <property type="match status" value="1"/>
</dbReference>
<dbReference type="SMART" id="SM00827">
    <property type="entry name" value="PKS_AT"/>
    <property type="match status" value="1"/>
</dbReference>
<dbReference type="SMART" id="SM00825">
    <property type="entry name" value="PKS_KS"/>
    <property type="match status" value="1"/>
</dbReference>
<dbReference type="SMART" id="SM00823">
    <property type="entry name" value="PKS_PP"/>
    <property type="match status" value="2"/>
</dbReference>
<dbReference type="SUPFAM" id="SSF47336">
    <property type="entry name" value="ACP-like"/>
    <property type="match status" value="2"/>
</dbReference>
<dbReference type="SUPFAM" id="SSF53474">
    <property type="entry name" value="alpha/beta-Hydrolases"/>
    <property type="match status" value="1"/>
</dbReference>
<dbReference type="SUPFAM" id="SSF52151">
    <property type="entry name" value="FabD/lysophospholipase-like"/>
    <property type="match status" value="1"/>
</dbReference>
<dbReference type="SUPFAM" id="SSF55048">
    <property type="entry name" value="Probable ACP-binding domain of malonyl-CoA ACP transacylase"/>
    <property type="match status" value="1"/>
</dbReference>
<dbReference type="SUPFAM" id="SSF56276">
    <property type="entry name" value="S-adenosylmethionine decarboxylase"/>
    <property type="match status" value="1"/>
</dbReference>
<dbReference type="SUPFAM" id="SSF53901">
    <property type="entry name" value="Thiolase-like"/>
    <property type="match status" value="1"/>
</dbReference>
<dbReference type="PROSITE" id="PS50075">
    <property type="entry name" value="CARRIER"/>
    <property type="match status" value="2"/>
</dbReference>
<dbReference type="PROSITE" id="PS00606">
    <property type="entry name" value="KS3_1"/>
    <property type="match status" value="1"/>
</dbReference>
<dbReference type="PROSITE" id="PS52004">
    <property type="entry name" value="KS3_2"/>
    <property type="match status" value="1"/>
</dbReference>
<dbReference type="PROSITE" id="PS00012">
    <property type="entry name" value="PHOSPHOPANTETHEINE"/>
    <property type="match status" value="1"/>
</dbReference>
<dbReference type="PROSITE" id="PS52019">
    <property type="entry name" value="PKS_MFAS_DH"/>
    <property type="match status" value="1"/>
</dbReference>
<proteinExistence type="evidence at protein level"/>
<gene>
    <name evidence="33" type="primary">alb1</name>
    <name evidence="34" type="synonym">pksP</name>
    <name type="ORF">AFUA_2G17600</name>
</gene>
<reference key="1">
    <citation type="journal article" date="2005" name="Nature">
        <title>Genomic sequence of the pathogenic and allergenic filamentous fungus Aspergillus fumigatus.</title>
        <authorList>
            <person name="Nierman W.C."/>
            <person name="Pain A."/>
            <person name="Anderson M.J."/>
            <person name="Wortman J.R."/>
            <person name="Kim H.S."/>
            <person name="Arroyo J."/>
            <person name="Berriman M."/>
            <person name="Abe K."/>
            <person name="Archer D.B."/>
            <person name="Bermejo C."/>
            <person name="Bennett J.W."/>
            <person name="Bowyer P."/>
            <person name="Chen D."/>
            <person name="Collins M."/>
            <person name="Coulsen R."/>
            <person name="Davies R."/>
            <person name="Dyer P.S."/>
            <person name="Farman M.L."/>
            <person name="Fedorova N."/>
            <person name="Fedorova N.D."/>
            <person name="Feldblyum T.V."/>
            <person name="Fischer R."/>
            <person name="Fosker N."/>
            <person name="Fraser A."/>
            <person name="Garcia J.L."/>
            <person name="Garcia M.J."/>
            <person name="Goble A."/>
            <person name="Goldman G.H."/>
            <person name="Gomi K."/>
            <person name="Griffith-Jones S."/>
            <person name="Gwilliam R."/>
            <person name="Haas B.J."/>
            <person name="Haas H."/>
            <person name="Harris D.E."/>
            <person name="Horiuchi H."/>
            <person name="Huang J."/>
            <person name="Humphray S."/>
            <person name="Jimenez J."/>
            <person name="Keller N."/>
            <person name="Khouri H."/>
            <person name="Kitamoto K."/>
            <person name="Kobayashi T."/>
            <person name="Konzack S."/>
            <person name="Kulkarni R."/>
            <person name="Kumagai T."/>
            <person name="Lafton A."/>
            <person name="Latge J.-P."/>
            <person name="Li W."/>
            <person name="Lord A."/>
            <person name="Lu C."/>
            <person name="Majoros W.H."/>
            <person name="May G.S."/>
            <person name="Miller B.L."/>
            <person name="Mohamoud Y."/>
            <person name="Molina M."/>
            <person name="Monod M."/>
            <person name="Mouyna I."/>
            <person name="Mulligan S."/>
            <person name="Murphy L.D."/>
            <person name="O'Neil S."/>
            <person name="Paulsen I."/>
            <person name="Penalva M.A."/>
            <person name="Pertea M."/>
            <person name="Price C."/>
            <person name="Pritchard B.L."/>
            <person name="Quail M.A."/>
            <person name="Rabbinowitsch E."/>
            <person name="Rawlins N."/>
            <person name="Rajandream M.A."/>
            <person name="Reichard U."/>
            <person name="Renauld H."/>
            <person name="Robson G.D."/>
            <person name="Rodriguez de Cordoba S."/>
            <person name="Rodriguez-Pena J.M."/>
            <person name="Ronning C.M."/>
            <person name="Rutter S."/>
            <person name="Salzberg S.L."/>
            <person name="Sanchez M."/>
            <person name="Sanchez-Ferrero J.C."/>
            <person name="Saunders D."/>
            <person name="Seeger K."/>
            <person name="Squares R."/>
            <person name="Squares S."/>
            <person name="Takeuchi M."/>
            <person name="Tekaia F."/>
            <person name="Turner G."/>
            <person name="Vazquez de Aldana C.R."/>
            <person name="Weidman J."/>
            <person name="White O."/>
            <person name="Woodward J.R."/>
            <person name="Yu J.-H."/>
            <person name="Fraser C.M."/>
            <person name="Galagan J.E."/>
            <person name="Asai K."/>
            <person name="Machida M."/>
            <person name="Hall N."/>
            <person name="Barrell B.G."/>
            <person name="Denning D.W."/>
        </authorList>
    </citation>
    <scope>NUCLEOTIDE SEQUENCE [LARGE SCALE GENOMIC DNA]</scope>
    <source>
        <strain>ATCC MYA-4609 / CBS 101355 / FGSC A1100 / Af293</strain>
    </source>
</reference>
<reference key="2">
    <citation type="journal article" date="1998" name="J. Bacteriol.">
        <title>The developmentally regulated alb1 gene of Aspergillus fumigatus: its role in modulation of conidial morphology and virulence.</title>
        <authorList>
            <person name="Tsai H.F."/>
            <person name="Chang Y.C."/>
            <person name="Washburn R.G."/>
            <person name="Wheeler M.H."/>
            <person name="Kwon-Chung K.J."/>
        </authorList>
    </citation>
    <scope>FUNCTION</scope>
    <scope>DISRUPTION PHENOTYPE</scope>
</reference>
<reference key="3">
    <citation type="journal article" date="1998" name="Med. Microbiol. Immunol.">
        <title>Identification of a polyketide synthase gene (pksP) of Aspergillus fumigatus involved in conidial pigment biosynthesis and virulence.</title>
        <authorList>
            <person name="Langfelder K."/>
            <person name="Jahn B."/>
            <person name="Gehringer H."/>
            <person name="Schmidt A."/>
            <person name="Wanner G."/>
            <person name="Brakhage A.A."/>
        </authorList>
    </citation>
    <scope>FUNCTION</scope>
    <scope>DISRUPTION PHENOTYPE</scope>
</reference>
<reference key="4">
    <citation type="journal article" date="1999" name="J. Bacteriol.">
        <title>A developmentally regulated gene cluster involved in conidial pigment biosynthesis in Aspergillus fumigatus.</title>
        <authorList>
            <person name="Tsai H.F."/>
            <person name="Wheeler M.H."/>
            <person name="Chang Y.C."/>
            <person name="Kwon-Chung K.J."/>
        </authorList>
    </citation>
    <scope>FUNCTION</scope>
</reference>
<reference key="5">
    <citation type="journal article" date="2000" name="FEMS Microbiol. Lett.">
        <title>Aspergillus fumigatus alb1 encodes naphthopyrone synthase when expressed in Aspergillus oryzae.</title>
        <authorList>
            <person name="Watanabe A."/>
            <person name="Fujii I."/>
            <person name="Tsai H."/>
            <person name="Chang Y.C."/>
            <person name="Kwon-Chung K.J."/>
            <person name="Ebizuka Y."/>
        </authorList>
    </citation>
    <scope>FUNCTION</scope>
    <scope>CATALYTIC ACTIVITY</scope>
</reference>
<reference key="6">
    <citation type="journal article" date="2001" name="J. Biol. Chem.">
        <title>Pentaketide melanin biosynthesis in Aspergillus fumigatus requires chain-length shortening of a heptaketide precursor.</title>
        <authorList>
            <person name="Tsai H.F."/>
            <person name="Fujii I."/>
            <person name="Watanabe A."/>
            <person name="Wheeler M.H."/>
            <person name="Chang Y.C."/>
            <person name="Yasuoka Y."/>
            <person name="Ebizuka Y."/>
            <person name="Kwon-Chung K.J."/>
        </authorList>
    </citation>
    <scope>FUNCTION</scope>
</reference>
<reference key="7">
    <citation type="journal article" date="2002" name="Cell. Microbiol.">
        <title>PKSP-dependent reduction of phagolysosome fusion and intracellular kill of Aspergillus fumigatus conidia by human monocyte-derived macrophages.</title>
        <authorList>
            <person name="Jahn B."/>
            <person name="Langfelder K."/>
            <person name="Schneider U."/>
            <person name="Schindel C."/>
            <person name="Brakhage A.A."/>
        </authorList>
    </citation>
    <scope>FUNCTION</scope>
    <scope>DISRUPTION PHENOTYPE</scope>
</reference>
<reference key="8">
    <citation type="journal article" date="2004" name="FEMS Microbiol. Lett.">
        <title>Gene silencing with RNA interference in the human pathogenic fungus Aspergillus fumigatus.</title>
        <authorList>
            <person name="Mouyna I."/>
            <person name="Henry C."/>
            <person name="Doering T.L."/>
            <person name="Latge J.P."/>
        </authorList>
    </citation>
    <scope>DISRUPTION PHENOTYPE</scope>
</reference>
<reference key="9">
    <citation type="journal article" date="2005" name="Appl. Environ. Microbiol.">
        <title>Agrobacterium tumefaciens-mediated transformation of Aspergillus fumigatus: an efficient tool for insertional mutagenesis and targeted gene disruption.</title>
        <authorList>
            <person name="Sugui J.A."/>
            <person name="Chang Y.C."/>
            <person name="Kwon-Chung K.J."/>
        </authorList>
    </citation>
    <scope>DISRUPTION PHENOTYPE</scope>
</reference>
<reference key="10">
    <citation type="journal article" date="2005" name="Med. Mycol.">
        <title>Aspergillus fumigatus conidial pigment and cAMP signal transduction: significance for virulence.</title>
        <authorList>
            <person name="Brakhage A.A."/>
            <person name="Liebmann B."/>
        </authorList>
    </citation>
    <scope>FUNCTION</scope>
    <scope>INDUCTION</scope>
</reference>
<reference key="11">
    <citation type="journal article" date="2007" name="Eukaryot. Cell">
        <title>Role of laeA in the regulation of alb1, gliP, conidial morphology, and virulence in Aspergillus fumigatus.</title>
        <authorList>
            <person name="Sugui J.A."/>
            <person name="Pardo J."/>
            <person name="Chang Y.C."/>
            <person name="Muellbacher A."/>
            <person name="Zarember K.A."/>
            <person name="Galvez E.M."/>
            <person name="Brinster L."/>
            <person name="Zerfas P."/>
            <person name="Gallin J.I."/>
            <person name="Simon M.M."/>
            <person name="Kwon-Chung K.J."/>
        </authorList>
    </citation>
    <scope>INDUCTION</scope>
</reference>
<reference key="12">
    <citation type="journal article" date="2007" name="FEMS Microbiol. Lett.">
        <title>Efficient downregulation of alb1 gene using an AMA1-based episomal expression of RNAi construct in Aspergillus fumigatus.</title>
        <authorList>
            <person name="Khalaj V."/>
            <person name="Eslami H."/>
            <person name="Azizi M."/>
            <person name="Rovira-Graells N."/>
            <person name="Bromley M."/>
        </authorList>
    </citation>
    <scope>DISRUPTION PHENOTYPE</scope>
</reference>
<reference key="13">
    <citation type="journal article" date="2008" name="Appl. Environ. Microbiol.">
        <title>Protein kinase A regulates growth, sporulation, and pigment formation in Aspergillus fumigatus.</title>
        <authorList>
            <person name="Grosse C."/>
            <person name="Heinekamp T."/>
            <person name="Kniemeyer O."/>
            <person name="Gehrke A."/>
            <person name="Brakhage A.A."/>
        </authorList>
    </citation>
    <scope>FUNCTION</scope>
    <scope>INDUCTION</scope>
</reference>
<reference key="14">
    <citation type="journal article" date="2009" name="BMC Microbiol.">
        <title>Melanin is an essential component for the integrity of the cell wall of Aspergillus fumigatus conidia.</title>
        <authorList>
            <person name="Pihet M."/>
            <person name="Vandeputte P."/>
            <person name="Tronchin G."/>
            <person name="Renier G."/>
            <person name="Saulnier P."/>
            <person name="Georgeault S."/>
            <person name="Mallet R."/>
            <person name="Chabasse D."/>
            <person name="Symoens F."/>
            <person name="Bouchara J.P."/>
        </authorList>
    </citation>
    <scope>FUNCTION</scope>
    <scope>DISRUPTION PHENOTYPE</scope>
</reference>
<reference key="15">
    <citation type="journal article" date="2009" name="PLoS ONE">
        <title>Conidiation color mutants of Aspergillus fumigatus are highly pathogenic to the heterologous insect host Galleria mellonella.</title>
        <authorList>
            <person name="Jackson J.C."/>
            <person name="Higgins L.A."/>
            <person name="Lin X."/>
        </authorList>
    </citation>
    <scope>FUNCTION</scope>
    <scope>DISRUPTION PHENOTYPE</scope>
</reference>
<reference key="16">
    <citation type="journal article" date="2010" name="Antimicrob. Agents Chemother.">
        <title>Cutaneous model of invasive aspergillosis.</title>
        <authorList>
            <person name="Ben-Ami R."/>
            <person name="Lewis R.E."/>
            <person name="Leventakos K."/>
            <person name="Latge J.P."/>
            <person name="Kontoyiannis D.P."/>
        </authorList>
    </citation>
    <scope>FUNCTION</scope>
    <scope>DISRUPTION PHENOTYPE</scope>
</reference>
<reference key="17">
    <citation type="journal article" date="2011" name="Cell. Microbiol.">
        <title>Phagocytosis of melanized Aspergillus conidia by macrophages exerts cytoprotective effects by sustained PI3K/Akt signalling.</title>
        <authorList>
            <person name="Volling K."/>
            <person name="Thywissen A."/>
            <person name="Brakhage A.A."/>
            <person name="Saluz H.P."/>
        </authorList>
    </citation>
    <scope>FUNCTION</scope>
    <scope>DISRUPTION PHENOTYPE</scope>
</reference>
<reference key="18">
    <citation type="journal article" date="2011" name="Front. Microbiol.">
        <title>Conidial dihydroxynaphthalene melanin of the human pathogenic fungus Aspergillus fumigatus interferes with the host endocytosis pathway.</title>
        <authorList>
            <person name="Thywissen A."/>
            <person name="Heinekamp T."/>
            <person name="Dahse H.M."/>
            <person name="Schmaler-Ripcke J."/>
            <person name="Nietzsche S."/>
            <person name="Zipfel P.F."/>
            <person name="Brakhage A.A."/>
        </authorList>
    </citation>
    <scope>FUNCTION</scope>
    <scope>DISRUPTION PHENOTYPE</scope>
</reference>
<reference key="19">
    <citation type="journal article" date="2011" name="PLoS ONE">
        <title>Automated image analysis of the host-pathogen interaction between phagocytes and Aspergillus fumigatus.</title>
        <authorList>
            <person name="Mech F."/>
            <person name="Thywissen A."/>
            <person name="Guthke R."/>
            <person name="Brakhage A.A."/>
            <person name="Figge M.T."/>
        </authorList>
    </citation>
    <scope>FUNCTION</scope>
    <scope>DISRUPTION PHENOTYPE</scope>
</reference>
<reference key="20">
    <citation type="journal article" date="2014" name="Infect. Immun.">
        <title>Surface structure characterization of Aspergillus fumigatus conidia mutated in the melanin synthesis pathway and their human cellular immune response.</title>
        <authorList>
            <person name="Bayry J."/>
            <person name="Beaussart A."/>
            <person name="Dufrene Y.F."/>
            <person name="Sharma M."/>
            <person name="Bansal K."/>
            <person name="Kniemeyer O."/>
            <person name="Aimanianda V."/>
            <person name="Brakhage A.A."/>
            <person name="Kaveri S.V."/>
            <person name="Kwon-Chung K.J."/>
            <person name="Latge J.P."/>
            <person name="Beauvais A."/>
        </authorList>
    </citation>
    <scope>FUNCTION</scope>
    <scope>DISRUPTION PHENOTYPE</scope>
</reference>
<reference key="21">
    <citation type="journal article" date="2014" name="Int. J. Med. Microbiol.">
        <title>Melanin dependent survival of Apergillus fumigatus conidia in lung epithelial cells.</title>
        <authorList>
            <person name="Amin S."/>
            <person name="Thywissen A."/>
            <person name="Heinekamp T."/>
            <person name="Saluz H.P."/>
            <person name="Brakhage A.A."/>
        </authorList>
    </citation>
    <scope>FUNCTION</scope>
    <scope>DISRUPTION PHENOTYPE</scope>
</reference>
<reference key="22">
    <citation type="journal article" date="2015" name="Environ. Microbiol.">
        <title>Virulence determinants of the human pathogenic fungus Aspergillus fumigatus protect against soil amoeba predation.</title>
        <authorList>
            <person name="Hillmann F."/>
            <person name="Novohradska S."/>
            <person name="Mattern D.J."/>
            <person name="Forberger T."/>
            <person name="Heinekamp T."/>
            <person name="Westermann M."/>
            <person name="Winckler T."/>
            <person name="Brakhage A.A."/>
        </authorList>
    </citation>
    <scope>FUNCTION</scope>
    <scope>DISRUPTION PHENOTYPE</scope>
</reference>
<reference key="23">
    <citation type="journal article" date="2015" name="J. Infect. Dis.">
        <title>Identification of Aspergillus fumigatus surface components that mediate interaction of conidia and hyphae with human platelets.</title>
        <authorList>
            <person name="Rambach G."/>
            <person name="Blum G."/>
            <person name="Latge J.P."/>
            <person name="Fontaine T."/>
            <person name="Heinekamp T."/>
            <person name="Hagleitner M."/>
            <person name="Jeckstroem H."/>
            <person name="Weigel G."/>
            <person name="Wuertinger P."/>
            <person name="Pfaller K."/>
            <person name="Krappmann S."/>
            <person name="Loeffler J."/>
            <person name="Lass-Floerl C."/>
            <person name="Speth C."/>
        </authorList>
    </citation>
    <scope>FUNCTION</scope>
    <scope>DISRUPTION PHENOTYPE</scope>
</reference>
<reference key="24">
    <citation type="journal article" date="2016" name="Cell Rep.">
        <title>Subcellular compartmentalization and trafficking of the biosynthetic machinery for fungal melanin.</title>
        <authorList>
            <person name="Upadhyay S."/>
            <person name="Xu X."/>
            <person name="Lowry D."/>
            <person name="Jackson J.C."/>
            <person name="Roberson R.W."/>
            <person name="Lin X."/>
        </authorList>
    </citation>
    <scope>SUBCELLULAR LOCATION</scope>
    <scope>FUNCTION</scope>
    <scope>DISRUPTION PHENOTYPE</scope>
</reference>
<reference key="25">
    <citation type="journal article" date="2016" name="Fungal Genet. Biol.">
        <title>Highly efficient CRISPR mutagenesis by microhomology-mediated end joining in Aspergillus fumigatus.</title>
        <authorList>
            <person name="Zhang C."/>
            <person name="Meng X."/>
            <person name="Wei X."/>
            <person name="Lu L."/>
        </authorList>
    </citation>
    <scope>DISRUPTION PHENOTYPE</scope>
</reference>
<evidence type="ECO:0000250" key="1">
    <source>
        <dbReference type="UniProtKB" id="Q03149"/>
    </source>
</evidence>
<evidence type="ECO:0000250" key="2">
    <source>
        <dbReference type="UniProtKB" id="Q5B0D0"/>
    </source>
</evidence>
<evidence type="ECO:0000255" key="3"/>
<evidence type="ECO:0000255" key="4">
    <source>
        <dbReference type="PROSITE-ProRule" id="PRU00258"/>
    </source>
</evidence>
<evidence type="ECO:0000255" key="5">
    <source>
        <dbReference type="PROSITE-ProRule" id="PRU01348"/>
    </source>
</evidence>
<evidence type="ECO:0000255" key="6">
    <source>
        <dbReference type="PROSITE-ProRule" id="PRU01363"/>
    </source>
</evidence>
<evidence type="ECO:0000255" key="7">
    <source>
        <dbReference type="PROSITE-ProRule" id="PRU10022"/>
    </source>
</evidence>
<evidence type="ECO:0000256" key="8">
    <source>
        <dbReference type="SAM" id="MobiDB-lite"/>
    </source>
</evidence>
<evidence type="ECO:0000269" key="9">
    <source>
    </source>
</evidence>
<evidence type="ECO:0000269" key="10">
    <source>
    </source>
</evidence>
<evidence type="ECO:0000269" key="11">
    <source>
    </source>
</evidence>
<evidence type="ECO:0000269" key="12">
    <source>
    </source>
</evidence>
<evidence type="ECO:0000269" key="13">
    <source>
    </source>
</evidence>
<evidence type="ECO:0000269" key="14">
    <source>
    </source>
</evidence>
<evidence type="ECO:0000269" key="15">
    <source>
    </source>
</evidence>
<evidence type="ECO:0000269" key="16">
    <source>
    </source>
</evidence>
<evidence type="ECO:0000269" key="17">
    <source>
    </source>
</evidence>
<evidence type="ECO:0000269" key="18">
    <source>
    </source>
</evidence>
<evidence type="ECO:0000269" key="19">
    <source>
    </source>
</evidence>
<evidence type="ECO:0000269" key="20">
    <source>
    </source>
</evidence>
<evidence type="ECO:0000269" key="21">
    <source>
    </source>
</evidence>
<evidence type="ECO:0000269" key="22">
    <source>
    </source>
</evidence>
<evidence type="ECO:0000269" key="23">
    <source>
    </source>
</evidence>
<evidence type="ECO:0000269" key="24">
    <source>
    </source>
</evidence>
<evidence type="ECO:0000269" key="25">
    <source>
    </source>
</evidence>
<evidence type="ECO:0000269" key="26">
    <source>
    </source>
</evidence>
<evidence type="ECO:0000269" key="27">
    <source>
    </source>
</evidence>
<evidence type="ECO:0000269" key="28">
    <source>
    </source>
</evidence>
<evidence type="ECO:0000269" key="29">
    <source>
    </source>
</evidence>
<evidence type="ECO:0000269" key="30">
    <source>
    </source>
</evidence>
<evidence type="ECO:0000269" key="31">
    <source>
    </source>
</evidence>
<evidence type="ECO:0000303" key="32">
    <source>
    </source>
</evidence>
<evidence type="ECO:0000303" key="33">
    <source>
    </source>
</evidence>
<evidence type="ECO:0000303" key="34">
    <source>
    </source>
</evidence>
<evidence type="ECO:0000305" key="35"/>
<organism>
    <name type="scientific">Aspergillus fumigatus (strain ATCC MYA-4609 / CBS 101355 / FGSC A1100 / Af293)</name>
    <name type="common">Neosartorya fumigata</name>
    <dbReference type="NCBI Taxonomy" id="330879"/>
    <lineage>
        <taxon>Eukaryota</taxon>
        <taxon>Fungi</taxon>
        <taxon>Dikarya</taxon>
        <taxon>Ascomycota</taxon>
        <taxon>Pezizomycotina</taxon>
        <taxon>Eurotiomycetes</taxon>
        <taxon>Eurotiomycetidae</taxon>
        <taxon>Eurotiales</taxon>
        <taxon>Aspergillaceae</taxon>
        <taxon>Aspergillus</taxon>
        <taxon>Aspergillus subgen. Fumigati</taxon>
    </lineage>
</organism>
<protein>
    <recommendedName>
        <fullName evidence="33">Conidial pigment polyketide synthase alb1</fullName>
        <ecNumber evidence="10">2.3.1.-</ecNumber>
    </recommendedName>
    <alternativeName>
        <fullName evidence="35">Conidial pigment biosynthesis protein alb1</fullName>
    </alternativeName>
    <alternativeName>
        <fullName evidence="32">Naphthopyrone synthase</fullName>
    </alternativeName>
</protein>
<name>ALB1_ASPFU</name>
<accession>Q4WZA8</accession>
<sequence length="2146" mass="234494">MEDLHRLYLFGDQTISCDEGLRNLLQAKNHTIVASFIERCFHALRQEITRLPPSQRTLFPRFTSIADLLAQHRESGTNPALGSALTCIYQLGCFIDYHGDRGHPYPSSDDGLLGSCTGMLSCTAVSSCKNVGELLPLAVEIVRLTIHLGLCVMRVREMVDSTESSSGSWSILVSEINEADATSLIGNFVKKRGIPPSSQPYISAVGSKGLTISAPPEILDNFIEEGLPKEYKHFKAPGVSGPYHAPHLYNDREIRNILSFCSEDVILRHTPRVPLVSSNTGKLVQVKSMRDLLKVALEEILLRKICWDKVTESCLSIVQATNDKPWRILPIASNATQGLVTALQRMGNCQIEVDTGVGAPQMDPAAPNATGNASRSKIAIIGMSGRFPEADGIEAFWDLLYKGLDVHKKVPPERWDVDAHVDLTGTKRNTSKVPYGCWINEPGLFDARFFNMSPREALQADPAQRLALLSAYEALEMAGFVPNSSPSTQRDRVGIFMGMTSDDYREINSGQDIDTYFIPGGNRAFTPGRINYYFKFSGPSVSVDTACSSSLAAIHLACNAIWRNDCDTAISGGVNLLTNPDNHAGLDRGHFLSRTGNCNTFDDGADGYCRADGVGTIVLKRLEDAEADNDPILGVINAAYTNHSAEAVSITRPHVGAQAFIFNKLLNDTNTNPHEIGYVEMHGTGTQAGDAVEMQSVLDVFAPDYRRGPANSLYLGSAKSNIGHGESASGVTSLVKVLLMLKQNMIPPHCGIKTKINHNFPTDLAQRNVHIAFKPTPWNRPVSGKRKMFINNFSAAGGNTALLMEDAPLREITGQDPRNVHVVSVTARSQTALKRNINALIKYINTHAPSSPANERRFLASLAYTTTARRMHHPFRVTAVGSSVKDIREVLRQRADQDVTTPVPATAPKTGFVFTGQGAQYTGMGKQLYEDCATFRSTIHRLDCIAQSQGFPSILPLIDGSMPVEELSPVVTQLGTTCLQMALVDYWKGLGVTPAFVLGHSLGDYAALNSAGVLSTSDTIYLCGRRAQLLTQQCQMGTHAMLAVKAAVSEIQHLLDPDVHAVACINGPTETVISGLSGRIDELAQQCSSQNLKSTKLKVPFAFHSAQVDPILESFEESAQGVIFHEPAVPFVSALNGEVITESNYSVLGPTYMVKHCREAVNFLGALEATRHAKLMDDATLWVEVGSHPICSGMIKSTFGPQATTVPSLRRDDDPWKILSNSLSTLHLAGVELNWKEFHQDFSSAHEVLELPRYGWDLKNYWIPYTNNFCLTKGGPVTAEVSAPKSTFLTTAAQKIVECREDGNTATLVVENNIAEPELNRVIQGHKVNGVALTPSSLYADIAQTLVDHLITKYKPEYQGLGLDVCDMTVPKPLIAKSGDQFFRVSAVMSWAEQKASVQVWSVNGDGKKMAEHAHCTVKLFNCAERETEWKRNSYLIKRSVSLLQDKAQTGEAHRMQRGMVYKLFAALVDYDENFKAIQEVILDSNEHEATARVKFQAPPGNFHRNPFWIDSFGHLSGFIMNASDATDSKNQVFVNHGWDSMRCLKKFSGDATYQTYVKMQPWKDSIWAGDVYVFEGDDIIAVYGGVKFQALARKILDTVLPPIGGSKTVGAPAPAPARPIGEKKAPPPIKVTGPPKPNPSNARAASPVVARALEILAAEVGLSEAEMTDSLNFADYGVDSLLSLTVTGRYREELNLDLESSVFMDYPTIKDFKAYLAEKGFCDSSSPEPSSEPESKFSFNSDASSEASSGLTTPGITSPVKHEAPKGGQNKVWKSICSIIAEEIGVSVGDIDPSDNLPEMGMDSLLSLTVLGRIRETLGMDLPAEFFLENPTLDAVQAALDLKPKMVPAATPVSEPIRLLETIDNTKPKTSRHPPATSILLQGNPHTATKKLFMFPDGSGSASSYATIPALSPDVCVYGLNCPYMKTPQNLTCSLDELTEPYLAEIRRRQPKGPYSFGGWSAGGICAFDAARQLILEEGEEVERLLLLDSPFPIGLEKLPPRLYKFFNSIGLFGDGKRAPPDWLLPHFLAFIDSLDAYKAVPLPFNDSKWAKKMPKTYLIWAKDGVCGKPGDPRPEPAEDGSEDPREMQWLLNDRTDLGPNKWDTLVGPQNIGGIHVMEDANHFTMTTGQKAKELSQFMATAMSS</sequence>